<keyword id="KW-0010">Activator</keyword>
<keyword id="KW-0963">Cytoplasm</keyword>
<keyword id="KW-0238">DNA-binding</keyword>
<keyword id="KW-1185">Reference proteome</keyword>
<keyword id="KW-0804">Transcription</keyword>
<keyword id="KW-0805">Transcription regulation</keyword>
<comment type="function">
    <text evidence="1">Can bind to ATTGG and CCAAT motifs (Y-box motifs) of single-stranded oligonucleotides.</text>
</comment>
<comment type="subunit">
    <text evidence="1">Homodimer.</text>
</comment>
<comment type="subcellular location">
    <subcellularLocation>
        <location evidence="1">Cytoplasm</location>
    </subcellularLocation>
</comment>
<accession>Q81DK5</accession>
<protein>
    <recommendedName>
        <fullName>Cold shock-like protein CspE</fullName>
    </recommendedName>
</protein>
<feature type="chain" id="PRO_0000100293" description="Cold shock-like protein CspE">
    <location>
        <begin position="1"/>
        <end position="67"/>
    </location>
</feature>
<feature type="domain" description="CSD">
    <location>
        <begin position="5"/>
        <end position="64"/>
    </location>
</feature>
<sequence length="67" mass="7339">MTLTGKVKWFNSEKGFGFIEVADGNDVFVHFSAITGDGFKSLDEGQEVSFEVEEGNRGPQAKNVVKL</sequence>
<evidence type="ECO:0000250" key="1"/>
<proteinExistence type="inferred from homology"/>
<name>CSPE_BACCR</name>
<dbReference type="EMBL" id="AE016877">
    <property type="protein sequence ID" value="AAP09321.1"/>
    <property type="molecule type" value="Genomic_DNA"/>
</dbReference>
<dbReference type="RefSeq" id="NP_832120.1">
    <property type="nucleotide sequence ID" value="NC_004722.1"/>
</dbReference>
<dbReference type="SMR" id="Q81DK5"/>
<dbReference type="STRING" id="226900.BC_2358"/>
<dbReference type="KEGG" id="bce:BC2358"/>
<dbReference type="PATRIC" id="fig|226900.8.peg.2386"/>
<dbReference type="HOGENOM" id="CLU_117621_6_3_9"/>
<dbReference type="OrthoDB" id="9805039at2"/>
<dbReference type="Proteomes" id="UP000001417">
    <property type="component" value="Chromosome"/>
</dbReference>
<dbReference type="GO" id="GO:0005737">
    <property type="term" value="C:cytoplasm"/>
    <property type="evidence" value="ECO:0007669"/>
    <property type="project" value="UniProtKB-SubCell"/>
</dbReference>
<dbReference type="GO" id="GO:0003677">
    <property type="term" value="F:DNA binding"/>
    <property type="evidence" value="ECO:0007669"/>
    <property type="project" value="UniProtKB-KW"/>
</dbReference>
<dbReference type="GO" id="GO:0003676">
    <property type="term" value="F:nucleic acid binding"/>
    <property type="evidence" value="ECO:0000318"/>
    <property type="project" value="GO_Central"/>
</dbReference>
<dbReference type="GO" id="GO:0010468">
    <property type="term" value="P:regulation of gene expression"/>
    <property type="evidence" value="ECO:0000318"/>
    <property type="project" value="GO_Central"/>
</dbReference>
<dbReference type="CDD" id="cd04458">
    <property type="entry name" value="CSP_CDS"/>
    <property type="match status" value="1"/>
</dbReference>
<dbReference type="FunFam" id="2.40.50.140:FF:000006">
    <property type="entry name" value="Cold shock protein CspC"/>
    <property type="match status" value="1"/>
</dbReference>
<dbReference type="Gene3D" id="6.20.370.130">
    <property type="match status" value="1"/>
</dbReference>
<dbReference type="Gene3D" id="2.40.50.140">
    <property type="entry name" value="Nucleic acid-binding proteins"/>
    <property type="match status" value="1"/>
</dbReference>
<dbReference type="InterPro" id="IPR012156">
    <property type="entry name" value="Cold_shock_CspA"/>
</dbReference>
<dbReference type="InterPro" id="IPR050181">
    <property type="entry name" value="Cold_shock_domain"/>
</dbReference>
<dbReference type="InterPro" id="IPR011129">
    <property type="entry name" value="CSD"/>
</dbReference>
<dbReference type="InterPro" id="IPR019844">
    <property type="entry name" value="CSD_CS"/>
</dbReference>
<dbReference type="InterPro" id="IPR002059">
    <property type="entry name" value="CSP_DNA-bd"/>
</dbReference>
<dbReference type="InterPro" id="IPR012340">
    <property type="entry name" value="NA-bd_OB-fold"/>
</dbReference>
<dbReference type="PANTHER" id="PTHR11544">
    <property type="entry name" value="COLD SHOCK DOMAIN CONTAINING PROTEINS"/>
    <property type="match status" value="1"/>
</dbReference>
<dbReference type="Pfam" id="PF00313">
    <property type="entry name" value="CSD"/>
    <property type="match status" value="1"/>
</dbReference>
<dbReference type="PIRSF" id="PIRSF002599">
    <property type="entry name" value="Cold_shock_A"/>
    <property type="match status" value="1"/>
</dbReference>
<dbReference type="PRINTS" id="PR00050">
    <property type="entry name" value="COLDSHOCK"/>
</dbReference>
<dbReference type="SMART" id="SM00357">
    <property type="entry name" value="CSP"/>
    <property type="match status" value="1"/>
</dbReference>
<dbReference type="SUPFAM" id="SSF50249">
    <property type="entry name" value="Nucleic acid-binding proteins"/>
    <property type="match status" value="1"/>
</dbReference>
<dbReference type="PROSITE" id="PS00352">
    <property type="entry name" value="CSD_1"/>
    <property type="match status" value="1"/>
</dbReference>
<dbReference type="PROSITE" id="PS51857">
    <property type="entry name" value="CSD_2"/>
    <property type="match status" value="1"/>
</dbReference>
<organism>
    <name type="scientific">Bacillus cereus (strain ATCC 14579 / DSM 31 / CCUG 7414 / JCM 2152 / NBRC 15305 / NCIMB 9373 / NCTC 2599 / NRRL B-3711)</name>
    <dbReference type="NCBI Taxonomy" id="226900"/>
    <lineage>
        <taxon>Bacteria</taxon>
        <taxon>Bacillati</taxon>
        <taxon>Bacillota</taxon>
        <taxon>Bacilli</taxon>
        <taxon>Bacillales</taxon>
        <taxon>Bacillaceae</taxon>
        <taxon>Bacillus</taxon>
        <taxon>Bacillus cereus group</taxon>
    </lineage>
</organism>
<gene>
    <name type="primary">cspE</name>
    <name type="ordered locus">BC_2358</name>
</gene>
<reference key="1">
    <citation type="journal article" date="2003" name="Nature">
        <title>Genome sequence of Bacillus cereus and comparative analysis with Bacillus anthracis.</title>
        <authorList>
            <person name="Ivanova N."/>
            <person name="Sorokin A."/>
            <person name="Anderson I."/>
            <person name="Galleron N."/>
            <person name="Candelon B."/>
            <person name="Kapatral V."/>
            <person name="Bhattacharyya A."/>
            <person name="Reznik G."/>
            <person name="Mikhailova N."/>
            <person name="Lapidus A."/>
            <person name="Chu L."/>
            <person name="Mazur M."/>
            <person name="Goltsman E."/>
            <person name="Larsen N."/>
            <person name="D'Souza M."/>
            <person name="Walunas T."/>
            <person name="Grechkin Y."/>
            <person name="Pusch G."/>
            <person name="Haselkorn R."/>
            <person name="Fonstein M."/>
            <person name="Ehrlich S.D."/>
            <person name="Overbeek R."/>
            <person name="Kyrpides N.C."/>
        </authorList>
    </citation>
    <scope>NUCLEOTIDE SEQUENCE [LARGE SCALE GENOMIC DNA]</scope>
    <source>
        <strain>ATCC 14579 / DSM 31 / CCUG 7414 / JCM 2152 / NBRC 15305 / NCIMB 9373 / NCTC 2599 / NRRL B-3711</strain>
    </source>
</reference>